<organism>
    <name type="scientific">Mus musculus</name>
    <name type="common">Mouse</name>
    <dbReference type="NCBI Taxonomy" id="10090"/>
    <lineage>
        <taxon>Eukaryota</taxon>
        <taxon>Metazoa</taxon>
        <taxon>Chordata</taxon>
        <taxon>Craniata</taxon>
        <taxon>Vertebrata</taxon>
        <taxon>Euteleostomi</taxon>
        <taxon>Mammalia</taxon>
        <taxon>Eutheria</taxon>
        <taxon>Euarchontoglires</taxon>
        <taxon>Glires</taxon>
        <taxon>Rodentia</taxon>
        <taxon>Myomorpha</taxon>
        <taxon>Muroidea</taxon>
        <taxon>Muridae</taxon>
        <taxon>Murinae</taxon>
        <taxon>Mus</taxon>
        <taxon>Mus</taxon>
    </lineage>
</organism>
<accession>Q9D8I3</accession>
<name>GLOD5_MOUSE</name>
<keyword id="KW-1185">Reference proteome</keyword>
<reference key="1">
    <citation type="journal article" date="2005" name="Science">
        <title>The transcriptional landscape of the mammalian genome.</title>
        <authorList>
            <person name="Carninci P."/>
            <person name="Kasukawa T."/>
            <person name="Katayama S."/>
            <person name="Gough J."/>
            <person name="Frith M.C."/>
            <person name="Maeda N."/>
            <person name="Oyama R."/>
            <person name="Ravasi T."/>
            <person name="Lenhard B."/>
            <person name="Wells C."/>
            <person name="Kodzius R."/>
            <person name="Shimokawa K."/>
            <person name="Bajic V.B."/>
            <person name="Brenner S.E."/>
            <person name="Batalov S."/>
            <person name="Forrest A.R."/>
            <person name="Zavolan M."/>
            <person name="Davis M.J."/>
            <person name="Wilming L.G."/>
            <person name="Aidinis V."/>
            <person name="Allen J.E."/>
            <person name="Ambesi-Impiombato A."/>
            <person name="Apweiler R."/>
            <person name="Aturaliya R.N."/>
            <person name="Bailey T.L."/>
            <person name="Bansal M."/>
            <person name="Baxter L."/>
            <person name="Beisel K.W."/>
            <person name="Bersano T."/>
            <person name="Bono H."/>
            <person name="Chalk A.M."/>
            <person name="Chiu K.P."/>
            <person name="Choudhary V."/>
            <person name="Christoffels A."/>
            <person name="Clutterbuck D.R."/>
            <person name="Crowe M.L."/>
            <person name="Dalla E."/>
            <person name="Dalrymple B.P."/>
            <person name="de Bono B."/>
            <person name="Della Gatta G."/>
            <person name="di Bernardo D."/>
            <person name="Down T."/>
            <person name="Engstrom P."/>
            <person name="Fagiolini M."/>
            <person name="Faulkner G."/>
            <person name="Fletcher C.F."/>
            <person name="Fukushima T."/>
            <person name="Furuno M."/>
            <person name="Futaki S."/>
            <person name="Gariboldi M."/>
            <person name="Georgii-Hemming P."/>
            <person name="Gingeras T.R."/>
            <person name="Gojobori T."/>
            <person name="Green R.E."/>
            <person name="Gustincich S."/>
            <person name="Harbers M."/>
            <person name="Hayashi Y."/>
            <person name="Hensch T.K."/>
            <person name="Hirokawa N."/>
            <person name="Hill D."/>
            <person name="Huminiecki L."/>
            <person name="Iacono M."/>
            <person name="Ikeo K."/>
            <person name="Iwama A."/>
            <person name="Ishikawa T."/>
            <person name="Jakt M."/>
            <person name="Kanapin A."/>
            <person name="Katoh M."/>
            <person name="Kawasawa Y."/>
            <person name="Kelso J."/>
            <person name="Kitamura H."/>
            <person name="Kitano H."/>
            <person name="Kollias G."/>
            <person name="Krishnan S.P."/>
            <person name="Kruger A."/>
            <person name="Kummerfeld S.K."/>
            <person name="Kurochkin I.V."/>
            <person name="Lareau L.F."/>
            <person name="Lazarevic D."/>
            <person name="Lipovich L."/>
            <person name="Liu J."/>
            <person name="Liuni S."/>
            <person name="McWilliam S."/>
            <person name="Madan Babu M."/>
            <person name="Madera M."/>
            <person name="Marchionni L."/>
            <person name="Matsuda H."/>
            <person name="Matsuzawa S."/>
            <person name="Miki H."/>
            <person name="Mignone F."/>
            <person name="Miyake S."/>
            <person name="Morris K."/>
            <person name="Mottagui-Tabar S."/>
            <person name="Mulder N."/>
            <person name="Nakano N."/>
            <person name="Nakauchi H."/>
            <person name="Ng P."/>
            <person name="Nilsson R."/>
            <person name="Nishiguchi S."/>
            <person name="Nishikawa S."/>
            <person name="Nori F."/>
            <person name="Ohara O."/>
            <person name="Okazaki Y."/>
            <person name="Orlando V."/>
            <person name="Pang K.C."/>
            <person name="Pavan W.J."/>
            <person name="Pavesi G."/>
            <person name="Pesole G."/>
            <person name="Petrovsky N."/>
            <person name="Piazza S."/>
            <person name="Reed J."/>
            <person name="Reid J.F."/>
            <person name="Ring B.Z."/>
            <person name="Ringwald M."/>
            <person name="Rost B."/>
            <person name="Ruan Y."/>
            <person name="Salzberg S.L."/>
            <person name="Sandelin A."/>
            <person name="Schneider C."/>
            <person name="Schoenbach C."/>
            <person name="Sekiguchi K."/>
            <person name="Semple C.A."/>
            <person name="Seno S."/>
            <person name="Sessa L."/>
            <person name="Sheng Y."/>
            <person name="Shibata Y."/>
            <person name="Shimada H."/>
            <person name="Shimada K."/>
            <person name="Silva D."/>
            <person name="Sinclair B."/>
            <person name="Sperling S."/>
            <person name="Stupka E."/>
            <person name="Sugiura K."/>
            <person name="Sultana R."/>
            <person name="Takenaka Y."/>
            <person name="Taki K."/>
            <person name="Tammoja K."/>
            <person name="Tan S.L."/>
            <person name="Tang S."/>
            <person name="Taylor M.S."/>
            <person name="Tegner J."/>
            <person name="Teichmann S.A."/>
            <person name="Ueda H.R."/>
            <person name="van Nimwegen E."/>
            <person name="Verardo R."/>
            <person name="Wei C.L."/>
            <person name="Yagi K."/>
            <person name="Yamanishi H."/>
            <person name="Zabarovsky E."/>
            <person name="Zhu S."/>
            <person name="Zimmer A."/>
            <person name="Hide W."/>
            <person name="Bult C."/>
            <person name="Grimmond S.M."/>
            <person name="Teasdale R.D."/>
            <person name="Liu E.T."/>
            <person name="Brusic V."/>
            <person name="Quackenbush J."/>
            <person name="Wahlestedt C."/>
            <person name="Mattick J.S."/>
            <person name="Hume D.A."/>
            <person name="Kai C."/>
            <person name="Sasaki D."/>
            <person name="Tomaru Y."/>
            <person name="Fukuda S."/>
            <person name="Kanamori-Katayama M."/>
            <person name="Suzuki M."/>
            <person name="Aoki J."/>
            <person name="Arakawa T."/>
            <person name="Iida J."/>
            <person name="Imamura K."/>
            <person name="Itoh M."/>
            <person name="Kato T."/>
            <person name="Kawaji H."/>
            <person name="Kawagashira N."/>
            <person name="Kawashima T."/>
            <person name="Kojima M."/>
            <person name="Kondo S."/>
            <person name="Konno H."/>
            <person name="Nakano K."/>
            <person name="Ninomiya N."/>
            <person name="Nishio T."/>
            <person name="Okada M."/>
            <person name="Plessy C."/>
            <person name="Shibata K."/>
            <person name="Shiraki T."/>
            <person name="Suzuki S."/>
            <person name="Tagami M."/>
            <person name="Waki K."/>
            <person name="Watahiki A."/>
            <person name="Okamura-Oho Y."/>
            <person name="Suzuki H."/>
            <person name="Kawai J."/>
            <person name="Hayashizaki Y."/>
        </authorList>
    </citation>
    <scope>NUCLEOTIDE SEQUENCE [LARGE SCALE MRNA]</scope>
    <source>
        <strain>C57BL/6J</strain>
        <tissue>Small intestine</tissue>
    </source>
</reference>
<reference key="2">
    <citation type="journal article" date="2009" name="PLoS Biol.">
        <title>Lineage-specific biology revealed by a finished genome assembly of the mouse.</title>
        <authorList>
            <person name="Church D.M."/>
            <person name="Goodstadt L."/>
            <person name="Hillier L.W."/>
            <person name="Zody M.C."/>
            <person name="Goldstein S."/>
            <person name="She X."/>
            <person name="Bult C.J."/>
            <person name="Agarwala R."/>
            <person name="Cherry J.L."/>
            <person name="DiCuccio M."/>
            <person name="Hlavina W."/>
            <person name="Kapustin Y."/>
            <person name="Meric P."/>
            <person name="Maglott D."/>
            <person name="Birtle Z."/>
            <person name="Marques A.C."/>
            <person name="Graves T."/>
            <person name="Zhou S."/>
            <person name="Teague B."/>
            <person name="Potamousis K."/>
            <person name="Churas C."/>
            <person name="Place M."/>
            <person name="Herschleb J."/>
            <person name="Runnheim R."/>
            <person name="Forrest D."/>
            <person name="Amos-Landgraf J."/>
            <person name="Schwartz D.C."/>
            <person name="Cheng Z."/>
            <person name="Lindblad-Toh K."/>
            <person name="Eichler E.E."/>
            <person name="Ponting C.P."/>
        </authorList>
    </citation>
    <scope>NUCLEOTIDE SEQUENCE [LARGE SCALE GENOMIC DNA]</scope>
    <source>
        <strain>C57BL/6J</strain>
    </source>
</reference>
<reference key="3">
    <citation type="journal article" date="2004" name="Genome Res.">
        <title>The status, quality, and expansion of the NIH full-length cDNA project: the Mammalian Gene Collection (MGC).</title>
        <authorList>
            <consortium name="The MGC Project Team"/>
        </authorList>
    </citation>
    <scope>NUCLEOTIDE SEQUENCE [LARGE SCALE MRNA]</scope>
    <source>
        <tissue>Kidney</tissue>
    </source>
</reference>
<reference key="4">
    <citation type="journal article" date="2010" name="Cell">
        <title>A tissue-specific atlas of mouse protein phosphorylation and expression.</title>
        <authorList>
            <person name="Huttlin E.L."/>
            <person name="Jedrychowski M.P."/>
            <person name="Elias J.E."/>
            <person name="Goswami T."/>
            <person name="Rad R."/>
            <person name="Beausoleil S.A."/>
            <person name="Villen J."/>
            <person name="Haas W."/>
            <person name="Sowa M.E."/>
            <person name="Gygi S.P."/>
        </authorList>
    </citation>
    <scope>IDENTIFICATION BY MASS SPECTROMETRY [LARGE SCALE ANALYSIS]</scope>
    <source>
        <tissue>Kidney</tissue>
    </source>
</reference>
<proteinExistence type="evidence at protein level"/>
<protein>
    <recommendedName>
        <fullName>Glyoxalase domain-containing protein 5</fullName>
    </recommendedName>
</protein>
<dbReference type="EMBL" id="AK008008">
    <property type="protein sequence ID" value="BAB25406.1"/>
    <property type="molecule type" value="mRNA"/>
</dbReference>
<dbReference type="EMBL" id="AL670169">
    <property type="status" value="NOT_ANNOTATED_CDS"/>
    <property type="molecule type" value="Genomic_DNA"/>
</dbReference>
<dbReference type="EMBL" id="BC061027">
    <property type="protein sequence ID" value="AAH61027.1"/>
    <property type="molecule type" value="mRNA"/>
</dbReference>
<dbReference type="CCDS" id="CCDS29982.1"/>
<dbReference type="RefSeq" id="NP_081503.1">
    <property type="nucleotide sequence ID" value="NM_027227.2"/>
</dbReference>
<dbReference type="SMR" id="Q9D8I3"/>
<dbReference type="FunCoup" id="Q9D8I3">
    <property type="interactions" value="2"/>
</dbReference>
<dbReference type="STRING" id="10090.ENSMUSP00000033503"/>
<dbReference type="iPTMnet" id="Q9D8I3"/>
<dbReference type="PhosphoSitePlus" id="Q9D8I3"/>
<dbReference type="jPOST" id="Q9D8I3"/>
<dbReference type="PaxDb" id="10090-ENSMUSP00000033503"/>
<dbReference type="PeptideAtlas" id="Q9D8I3"/>
<dbReference type="ProteomicsDB" id="267729"/>
<dbReference type="Antibodypedia" id="546">
    <property type="antibodies" value="8 antibodies from 7 providers"/>
</dbReference>
<dbReference type="DNASU" id="69824"/>
<dbReference type="Ensembl" id="ENSMUST00000033503.3">
    <property type="protein sequence ID" value="ENSMUSP00000033503.3"/>
    <property type="gene ID" value="ENSMUSG00000031163.3"/>
</dbReference>
<dbReference type="GeneID" id="69824"/>
<dbReference type="KEGG" id="mmu:69824"/>
<dbReference type="UCSC" id="uc009snn.1">
    <property type="organism name" value="mouse"/>
</dbReference>
<dbReference type="AGR" id="MGI:1917074"/>
<dbReference type="CTD" id="392465"/>
<dbReference type="MGI" id="MGI:1917074">
    <property type="gene designation" value="Glod5"/>
</dbReference>
<dbReference type="VEuPathDB" id="HostDB:ENSMUSG00000031163"/>
<dbReference type="eggNOG" id="ENOG502RZMP">
    <property type="taxonomic scope" value="Eukaryota"/>
</dbReference>
<dbReference type="GeneTree" id="ENSGT00940000153941"/>
<dbReference type="HOGENOM" id="CLU_046006_4_3_1"/>
<dbReference type="InParanoid" id="Q9D8I3"/>
<dbReference type="OMA" id="FGTHKIN"/>
<dbReference type="OrthoDB" id="5371818at2759"/>
<dbReference type="PhylomeDB" id="Q9D8I3"/>
<dbReference type="TreeFam" id="TF300075"/>
<dbReference type="BioGRID-ORCS" id="69824">
    <property type="hits" value="1 hit in 77 CRISPR screens"/>
</dbReference>
<dbReference type="PRO" id="PR:Q9D8I3"/>
<dbReference type="Proteomes" id="UP000000589">
    <property type="component" value="Chromosome X"/>
</dbReference>
<dbReference type="RNAct" id="Q9D8I3">
    <property type="molecule type" value="protein"/>
</dbReference>
<dbReference type="Bgee" id="ENSMUSG00000031163">
    <property type="expression patterns" value="Expressed in small intestine Peyer's patch and 44 other cell types or tissues"/>
</dbReference>
<dbReference type="CDD" id="cd07253">
    <property type="entry name" value="GLOD5"/>
    <property type="match status" value="1"/>
</dbReference>
<dbReference type="Gene3D" id="3.10.180.10">
    <property type="entry name" value="2,3-Dihydroxybiphenyl 1,2-Dioxygenase, domain 1"/>
    <property type="match status" value="1"/>
</dbReference>
<dbReference type="InterPro" id="IPR029068">
    <property type="entry name" value="Glyas_Bleomycin-R_OHBP_Dase"/>
</dbReference>
<dbReference type="InterPro" id="IPR004360">
    <property type="entry name" value="Glyas_Fos-R_dOase_dom"/>
</dbReference>
<dbReference type="InterPro" id="IPR050383">
    <property type="entry name" value="GlyoxalaseI/FosfomycinResist"/>
</dbReference>
<dbReference type="InterPro" id="IPR037523">
    <property type="entry name" value="VOC"/>
</dbReference>
<dbReference type="PANTHER" id="PTHR21366:SF14">
    <property type="entry name" value="GLYOXALASE DOMAIN-CONTAINING PROTEIN 5"/>
    <property type="match status" value="1"/>
</dbReference>
<dbReference type="PANTHER" id="PTHR21366">
    <property type="entry name" value="GLYOXALASE FAMILY PROTEIN"/>
    <property type="match status" value="1"/>
</dbReference>
<dbReference type="Pfam" id="PF00903">
    <property type="entry name" value="Glyoxalase"/>
    <property type="match status" value="1"/>
</dbReference>
<dbReference type="SUPFAM" id="SSF54593">
    <property type="entry name" value="Glyoxalase/Bleomycin resistance protein/Dihydroxybiphenyl dioxygenase"/>
    <property type="match status" value="1"/>
</dbReference>
<dbReference type="PROSITE" id="PS51819">
    <property type="entry name" value="VOC"/>
    <property type="match status" value="1"/>
</dbReference>
<comment type="similarity">
    <text evidence="2">Belongs to the glyoxalase I family.</text>
</comment>
<feature type="chain" id="PRO_0000305327" description="Glyoxalase domain-containing protein 5">
    <location>
        <begin position="1"/>
        <end position="148"/>
    </location>
</feature>
<feature type="domain" description="VOC" evidence="1">
    <location>
        <begin position="25"/>
        <end position="145"/>
    </location>
</feature>
<evidence type="ECO:0000255" key="1">
    <source>
        <dbReference type="PROSITE-ProRule" id="PRU01163"/>
    </source>
</evidence>
<evidence type="ECO:0000305" key="2"/>
<sequence>MCDPTSESQLWRSSSQIPSPCLICRLDHIVMTVKNIEDTTMFYSKILGMEVTTFKGNRKALCFGDQKFNLHEVGKEFDPKAAHPVPGSLDVCLITEAPLEEVIERLKAFDVPIEEGPVFRTGAKGPILSIYFRDPDRNLLEVSSYVTS</sequence>
<gene>
    <name type="primary">Glod5</name>
</gene>